<reference key="1">
    <citation type="journal article" date="2008" name="Plant Cell">
        <title>Arabidopsis TONNEAU1 proteins are essential for preprophase band formation and interact with centrin.</title>
        <authorList>
            <person name="Azimzadeh J."/>
            <person name="Nacry P."/>
            <person name="Christodoulidou A."/>
            <person name="Drevensek S."/>
            <person name="Camilleri C."/>
            <person name="Amiour N."/>
            <person name="Parcy F."/>
            <person name="Pastuglia M."/>
            <person name="Bouchez D."/>
        </authorList>
    </citation>
    <scope>NUCLEOTIDE SEQUENCE [GENOMIC DNA]</scope>
    <scope>FUNCTION</scope>
    <scope>INTERACTION WITH CEN1</scope>
    <scope>SUBCELLULAR LOCATION</scope>
    <scope>DISRUPTION PHENOTYPE</scope>
    <source>
        <strain>cv. Columbia</strain>
    </source>
</reference>
<reference key="2">
    <citation type="journal article" date="2000" name="Nature">
        <title>Sequence and analysis of chromosome 3 of the plant Arabidopsis thaliana.</title>
        <authorList>
            <person name="Salanoubat M."/>
            <person name="Lemcke K."/>
            <person name="Rieger M."/>
            <person name="Ansorge W."/>
            <person name="Unseld M."/>
            <person name="Fartmann B."/>
            <person name="Valle G."/>
            <person name="Bloecker H."/>
            <person name="Perez-Alonso M."/>
            <person name="Obermaier B."/>
            <person name="Delseny M."/>
            <person name="Boutry M."/>
            <person name="Grivell L.A."/>
            <person name="Mache R."/>
            <person name="Puigdomenech P."/>
            <person name="De Simone V."/>
            <person name="Choisne N."/>
            <person name="Artiguenave F."/>
            <person name="Robert C."/>
            <person name="Brottier P."/>
            <person name="Wincker P."/>
            <person name="Cattolico L."/>
            <person name="Weissenbach J."/>
            <person name="Saurin W."/>
            <person name="Quetier F."/>
            <person name="Schaefer M."/>
            <person name="Mueller-Auer S."/>
            <person name="Gabel C."/>
            <person name="Fuchs M."/>
            <person name="Benes V."/>
            <person name="Wurmbach E."/>
            <person name="Drzonek H."/>
            <person name="Erfle H."/>
            <person name="Jordan N."/>
            <person name="Bangert S."/>
            <person name="Wiedelmann R."/>
            <person name="Kranz H."/>
            <person name="Voss H."/>
            <person name="Holland R."/>
            <person name="Brandt P."/>
            <person name="Nyakatura G."/>
            <person name="Vezzi A."/>
            <person name="D'Angelo M."/>
            <person name="Pallavicini A."/>
            <person name="Toppo S."/>
            <person name="Simionati B."/>
            <person name="Conrad A."/>
            <person name="Hornischer K."/>
            <person name="Kauer G."/>
            <person name="Loehnert T.-H."/>
            <person name="Nordsiek G."/>
            <person name="Reichelt J."/>
            <person name="Scharfe M."/>
            <person name="Schoen O."/>
            <person name="Bargues M."/>
            <person name="Terol J."/>
            <person name="Climent J."/>
            <person name="Navarro P."/>
            <person name="Collado C."/>
            <person name="Perez-Perez A."/>
            <person name="Ottenwaelder B."/>
            <person name="Duchemin D."/>
            <person name="Cooke R."/>
            <person name="Laudie M."/>
            <person name="Berger-Llauro C."/>
            <person name="Purnelle B."/>
            <person name="Masuy D."/>
            <person name="de Haan M."/>
            <person name="Maarse A.C."/>
            <person name="Alcaraz J.-P."/>
            <person name="Cottet A."/>
            <person name="Casacuberta E."/>
            <person name="Monfort A."/>
            <person name="Argiriou A."/>
            <person name="Flores M."/>
            <person name="Liguori R."/>
            <person name="Vitale D."/>
            <person name="Mannhaupt G."/>
            <person name="Haase D."/>
            <person name="Schoof H."/>
            <person name="Rudd S."/>
            <person name="Zaccaria P."/>
            <person name="Mewes H.-W."/>
            <person name="Mayer K.F.X."/>
            <person name="Kaul S."/>
            <person name="Town C.D."/>
            <person name="Koo H.L."/>
            <person name="Tallon L.J."/>
            <person name="Jenkins J."/>
            <person name="Rooney T."/>
            <person name="Rizzo M."/>
            <person name="Walts A."/>
            <person name="Utterback T."/>
            <person name="Fujii C.Y."/>
            <person name="Shea T.P."/>
            <person name="Creasy T.H."/>
            <person name="Haas B."/>
            <person name="Maiti R."/>
            <person name="Wu D."/>
            <person name="Peterson J."/>
            <person name="Van Aken S."/>
            <person name="Pai G."/>
            <person name="Militscher J."/>
            <person name="Sellers P."/>
            <person name="Gill J.E."/>
            <person name="Feldblyum T.V."/>
            <person name="Preuss D."/>
            <person name="Lin X."/>
            <person name="Nierman W.C."/>
            <person name="Salzberg S.L."/>
            <person name="White O."/>
            <person name="Venter J.C."/>
            <person name="Fraser C.M."/>
            <person name="Kaneko T."/>
            <person name="Nakamura Y."/>
            <person name="Sato S."/>
            <person name="Kato T."/>
            <person name="Asamizu E."/>
            <person name="Sasamoto S."/>
            <person name="Kimura T."/>
            <person name="Idesawa K."/>
            <person name="Kawashima K."/>
            <person name="Kishida Y."/>
            <person name="Kiyokawa C."/>
            <person name="Kohara M."/>
            <person name="Matsumoto M."/>
            <person name="Matsuno A."/>
            <person name="Muraki A."/>
            <person name="Nakayama S."/>
            <person name="Nakazaki N."/>
            <person name="Shinpo S."/>
            <person name="Takeuchi C."/>
            <person name="Wada T."/>
            <person name="Watanabe A."/>
            <person name="Yamada M."/>
            <person name="Yasuda M."/>
            <person name="Tabata S."/>
        </authorList>
    </citation>
    <scope>NUCLEOTIDE SEQUENCE [LARGE SCALE GENOMIC DNA]</scope>
    <source>
        <strain>cv. Columbia</strain>
    </source>
</reference>
<reference key="3">
    <citation type="journal article" date="2017" name="Plant J.">
        <title>Araport11: a complete reannotation of the Arabidopsis thaliana reference genome.</title>
        <authorList>
            <person name="Cheng C.Y."/>
            <person name="Krishnakumar V."/>
            <person name="Chan A.P."/>
            <person name="Thibaud-Nissen F."/>
            <person name="Schobel S."/>
            <person name="Town C.D."/>
        </authorList>
    </citation>
    <scope>GENOME REANNOTATION</scope>
    <source>
        <strain>cv. Columbia</strain>
    </source>
</reference>
<reference key="4">
    <citation type="journal article" date="2002" name="Science">
        <title>Functional annotation of a full-length Arabidopsis cDNA collection.</title>
        <authorList>
            <person name="Seki M."/>
            <person name="Narusaka M."/>
            <person name="Kamiya A."/>
            <person name="Ishida J."/>
            <person name="Satou M."/>
            <person name="Sakurai T."/>
            <person name="Nakajima M."/>
            <person name="Enju A."/>
            <person name="Akiyama K."/>
            <person name="Oono Y."/>
            <person name="Muramatsu M."/>
            <person name="Hayashizaki Y."/>
            <person name="Kawai J."/>
            <person name="Carninci P."/>
            <person name="Itoh M."/>
            <person name="Ishii Y."/>
            <person name="Arakawa T."/>
            <person name="Shibata K."/>
            <person name="Shinagawa A."/>
            <person name="Shinozaki K."/>
        </authorList>
    </citation>
    <scope>NUCLEOTIDE SEQUENCE [LARGE SCALE MRNA]</scope>
    <source>
        <strain>cv. Columbia</strain>
    </source>
</reference>
<reference key="5">
    <citation type="submission" date="2006-02" db="EMBL/GenBank/DDBJ databases">
        <title>Arabidopsis ORF clones.</title>
        <authorList>
            <person name="Shinn P."/>
            <person name="Chen H."/>
            <person name="Kim C.J."/>
            <person name="Ecker J.R."/>
        </authorList>
    </citation>
    <scope>NUCLEOTIDE SEQUENCE [LARGE SCALE MRNA]</scope>
</reference>
<reference key="6">
    <citation type="journal article" date="2012" name="Plant Cell">
        <title>The Arabidopsis TRM1-TON1 interaction reveals a recruitment network common to plant cortical microtubule arrays and eukaryotic centrosomes.</title>
        <authorList>
            <person name="Drevensek S."/>
            <person name="Goussot M."/>
            <person name="Duroc Y."/>
            <person name="Christodoulidou A."/>
            <person name="Steyaert S."/>
            <person name="Schaefer E."/>
            <person name="Duvernois E."/>
            <person name="Grandjean O."/>
            <person name="Vantard M."/>
            <person name="Bouchez D."/>
            <person name="Pastuglia M."/>
        </authorList>
    </citation>
    <scope>INTERACTION WITH LNG1 AND LNG2</scope>
    <scope>SUBCELLULAR LOCATION</scope>
</reference>
<keyword id="KW-0963">Cytoplasm</keyword>
<keyword id="KW-0206">Cytoskeleton</keyword>
<keyword id="KW-1185">Reference proteome</keyword>
<proteinExistence type="evidence at protein level"/>
<name>TON1A_ARATH</name>
<sequence>MDDYTREMMDLKTLVTRTLEKKGVLAKIRAELRASVFEAIEEEDRVIENNEGPPPALLGSCNDRARKLHASPSGRLLSALICEYLDWAQLNHTLIVYQPESNLPKDSWKSELRDFNSNNGFELNRNGDSGPLLLDVLEGFLKFESMTQGMGSSSRRDSETESSSSLESRNPPRRSSASDSLPPQRRPVSASQASDRRAGLSTSGYRKDEFNWRQGNQDTHEEVTRASAALENLQLDRKTRNLTSSWRNVRDGTNEEEGRD</sequence>
<dbReference type="EMBL" id="AF280058">
    <property type="protein sequence ID" value="AAG35779.1"/>
    <property type="molecule type" value="Genomic_DNA"/>
</dbReference>
<dbReference type="EMBL" id="AL049655">
    <property type="status" value="NOT_ANNOTATED_CDS"/>
    <property type="molecule type" value="Genomic_DNA"/>
</dbReference>
<dbReference type="EMBL" id="CP002686">
    <property type="protein sequence ID" value="AEE79325.1"/>
    <property type="molecule type" value="Genomic_DNA"/>
</dbReference>
<dbReference type="EMBL" id="AK117295">
    <property type="protein sequence ID" value="BAC41967.1"/>
    <property type="molecule type" value="mRNA"/>
</dbReference>
<dbReference type="EMBL" id="BT024487">
    <property type="protein sequence ID" value="ABD19668.1"/>
    <property type="molecule type" value="mRNA"/>
</dbReference>
<dbReference type="RefSeq" id="NP_567012.1">
    <property type="nucleotide sequence ID" value="NM_115357.4"/>
</dbReference>
<dbReference type="SMR" id="Q9FQ25"/>
<dbReference type="BioGRID" id="9981">
    <property type="interactions" value="6"/>
</dbReference>
<dbReference type="FunCoup" id="Q9FQ25">
    <property type="interactions" value="2631"/>
</dbReference>
<dbReference type="IntAct" id="Q9FQ25">
    <property type="interactions" value="1"/>
</dbReference>
<dbReference type="STRING" id="3702.Q9FQ25"/>
<dbReference type="iPTMnet" id="Q9FQ25"/>
<dbReference type="PaxDb" id="3702-AT3G55000.1"/>
<dbReference type="ProteomicsDB" id="234312"/>
<dbReference type="EnsemblPlants" id="AT3G55000.1">
    <property type="protein sequence ID" value="AT3G55000.1"/>
    <property type="gene ID" value="AT3G55000"/>
</dbReference>
<dbReference type="GeneID" id="824665"/>
<dbReference type="Gramene" id="AT3G55000.1">
    <property type="protein sequence ID" value="AT3G55000.1"/>
    <property type="gene ID" value="AT3G55000"/>
</dbReference>
<dbReference type="KEGG" id="ath:AT3G55000"/>
<dbReference type="Araport" id="AT3G55000"/>
<dbReference type="TAIR" id="AT3G55000">
    <property type="gene designation" value="TON1A"/>
</dbReference>
<dbReference type="eggNOG" id="ENOG502QRFJ">
    <property type="taxonomic scope" value="Eukaryota"/>
</dbReference>
<dbReference type="HOGENOM" id="CLU_071412_0_0_1"/>
<dbReference type="InParanoid" id="Q9FQ25"/>
<dbReference type="OMA" id="YNWRYDD"/>
<dbReference type="PhylomeDB" id="Q9FQ25"/>
<dbReference type="CD-CODE" id="33FCD62D">
    <property type="entry name" value="Centrosome"/>
</dbReference>
<dbReference type="PRO" id="PR:Q9FQ25"/>
<dbReference type="Proteomes" id="UP000006548">
    <property type="component" value="Chromosome 3"/>
</dbReference>
<dbReference type="ExpressionAtlas" id="Q9FQ25">
    <property type="expression patterns" value="baseline and differential"/>
</dbReference>
<dbReference type="GO" id="GO:0005938">
    <property type="term" value="C:cell cortex"/>
    <property type="evidence" value="ECO:0000314"/>
    <property type="project" value="TAIR"/>
</dbReference>
<dbReference type="GO" id="GO:0030863">
    <property type="term" value="C:cortical cytoskeleton"/>
    <property type="evidence" value="ECO:0000314"/>
    <property type="project" value="TAIR"/>
</dbReference>
<dbReference type="GO" id="GO:0030981">
    <property type="term" value="C:cortical microtubule cytoskeleton"/>
    <property type="evidence" value="ECO:0000314"/>
    <property type="project" value="UniProtKB"/>
</dbReference>
<dbReference type="GO" id="GO:0005737">
    <property type="term" value="C:cytoplasm"/>
    <property type="evidence" value="ECO:0000314"/>
    <property type="project" value="UniProtKB"/>
</dbReference>
<dbReference type="GO" id="GO:0005829">
    <property type="term" value="C:cytosol"/>
    <property type="evidence" value="ECO:0007005"/>
    <property type="project" value="TAIR"/>
</dbReference>
<dbReference type="GO" id="GO:0009574">
    <property type="term" value="C:preprophase band"/>
    <property type="evidence" value="ECO:0000314"/>
    <property type="project" value="TAIR"/>
</dbReference>
<dbReference type="GO" id="GO:0030865">
    <property type="term" value="P:cortical cytoskeleton organization"/>
    <property type="evidence" value="ECO:0000315"/>
    <property type="project" value="UniProtKB"/>
</dbReference>
<dbReference type="GO" id="GO:0000226">
    <property type="term" value="P:microtubule cytoskeleton organization"/>
    <property type="evidence" value="ECO:0000315"/>
    <property type="project" value="UniProtKB"/>
</dbReference>
<dbReference type="GO" id="GO:0000913">
    <property type="term" value="P:preprophase band assembly"/>
    <property type="evidence" value="ECO:0000315"/>
    <property type="project" value="UniProtKB"/>
</dbReference>
<dbReference type="Gene3D" id="1.20.960.40">
    <property type="match status" value="1"/>
</dbReference>
<dbReference type="InterPro" id="IPR006594">
    <property type="entry name" value="LisH"/>
</dbReference>
<dbReference type="PANTHER" id="PTHR15431">
    <property type="entry name" value="FGFR1 ONCOGENE PARTNER/LISH DOMAIN-CONTAINING PROTEIN"/>
    <property type="match status" value="1"/>
</dbReference>
<dbReference type="PANTHER" id="PTHR15431:SF23">
    <property type="entry name" value="PROTEIN TONNEAU 1A"/>
    <property type="match status" value="1"/>
</dbReference>
<dbReference type="Pfam" id="PF16045">
    <property type="entry name" value="LisH_2"/>
    <property type="match status" value="1"/>
</dbReference>
<dbReference type="PROSITE" id="PS50896">
    <property type="entry name" value="LISH"/>
    <property type="match status" value="1"/>
</dbReference>
<organism>
    <name type="scientific">Arabidopsis thaliana</name>
    <name type="common">Mouse-ear cress</name>
    <dbReference type="NCBI Taxonomy" id="3702"/>
    <lineage>
        <taxon>Eukaryota</taxon>
        <taxon>Viridiplantae</taxon>
        <taxon>Streptophyta</taxon>
        <taxon>Embryophyta</taxon>
        <taxon>Tracheophyta</taxon>
        <taxon>Spermatophyta</taxon>
        <taxon>Magnoliopsida</taxon>
        <taxon>eudicotyledons</taxon>
        <taxon>Gunneridae</taxon>
        <taxon>Pentapetalae</taxon>
        <taxon>rosids</taxon>
        <taxon>malvids</taxon>
        <taxon>Brassicales</taxon>
        <taxon>Brassicaceae</taxon>
        <taxon>Camelineae</taxon>
        <taxon>Arabidopsis</taxon>
    </lineage>
</organism>
<evidence type="ECO:0000255" key="1">
    <source>
        <dbReference type="PROSITE-ProRule" id="PRU00126"/>
    </source>
</evidence>
<evidence type="ECO:0000256" key="2">
    <source>
        <dbReference type="SAM" id="MobiDB-lite"/>
    </source>
</evidence>
<evidence type="ECO:0000269" key="3">
    <source>
    </source>
</evidence>
<evidence type="ECO:0000269" key="4">
    <source>
    </source>
</evidence>
<protein>
    <recommendedName>
        <fullName>Protein TONNEAU 1a</fullName>
    </recommendedName>
    <alternativeName>
        <fullName>Protein TONNEAU 1</fullName>
    </alternativeName>
</protein>
<feature type="chain" id="PRO_0000420916" description="Protein TONNEAU 1a">
    <location>
        <begin position="1"/>
        <end position="260"/>
    </location>
</feature>
<feature type="domain" description="LisH" evidence="1">
    <location>
        <begin position="73"/>
        <end position="105"/>
    </location>
</feature>
<feature type="region of interest" description="Disordered" evidence="2">
    <location>
        <begin position="147"/>
        <end position="224"/>
    </location>
</feature>
<feature type="region of interest" description="Disordered" evidence="2">
    <location>
        <begin position="236"/>
        <end position="260"/>
    </location>
</feature>
<feature type="compositionally biased region" description="Low complexity" evidence="2">
    <location>
        <begin position="161"/>
        <end position="175"/>
    </location>
</feature>
<feature type="compositionally biased region" description="Basic and acidic residues" evidence="2">
    <location>
        <begin position="248"/>
        <end position="260"/>
    </location>
</feature>
<accession>Q9FQ25</accession>
<comment type="function">
    <text evidence="3">Involved in the control of the dynamic organization of the cortical cytoskeleton. May play a role in the organization of microtubule arrays at the centrosome through interaction with centrin 1 (CEN1).</text>
</comment>
<comment type="subunit">
    <text evidence="3 4">Interacts with CEN1, LNG1/TRM2 and LNG2/TRM1 (via C-terminus).</text>
</comment>
<comment type="subcellular location">
    <subcellularLocation>
        <location evidence="3 4">Cytoplasm</location>
    </subcellularLocation>
    <subcellularLocation>
        <location evidence="3 4">Cytoplasm</location>
        <location evidence="3 4">Cytoskeleton</location>
    </subcellularLocation>
    <text evidence="3 4">Localizes to cytoplasm and cortical cytoskeletal structures, including the preprophase band and the interphase microtubule arrays (PubMed:18757558). Recruited to cytoskeletal structures by LNG2/TRM1 (PubMed:22286137).</text>
</comment>
<comment type="disruption phenotype">
    <text evidence="3">Extreme defects in morphogenesis, positioning of mitotic division planes and cellular organization due to dysfunction of the cortical cytoskeleton and absence of the preprophase band of microtubules. In the ton1 insertional mutant, the two highly similar genes in tandem, TON1A and TON1B are simultaneously disrupted.</text>
</comment>
<gene>
    <name type="primary">TON1A</name>
    <name type="synonym">TON1</name>
    <name type="ordered locus">At3g55000</name>
    <name type="ORF">F28P10</name>
</gene>